<dbReference type="EC" id="3.6.5.2" evidence="2"/>
<dbReference type="EMBL" id="X84220">
    <property type="protein sequence ID" value="CAA59004.1"/>
    <property type="molecule type" value="mRNA"/>
</dbReference>
<dbReference type="PIR" id="S52325">
    <property type="entry name" value="S52325"/>
</dbReference>
<dbReference type="RefSeq" id="NP_990559.1">
    <property type="nucleotide sequence ID" value="NM_205228.2"/>
</dbReference>
<dbReference type="RefSeq" id="XP_015138187.1">
    <property type="nucleotide sequence ID" value="XM_015282701.1"/>
</dbReference>
<dbReference type="RefSeq" id="XP_015138188.1">
    <property type="nucleotide sequence ID" value="XM_015282702.1"/>
</dbReference>
<dbReference type="RefSeq" id="XP_040532407.1">
    <property type="nucleotide sequence ID" value="XM_040676473.2"/>
</dbReference>
<dbReference type="RefSeq" id="XP_046766391.1">
    <property type="nucleotide sequence ID" value="XM_046910435.1"/>
</dbReference>
<dbReference type="SMR" id="Q90965"/>
<dbReference type="FunCoup" id="Q90965">
    <property type="interactions" value="2875"/>
</dbReference>
<dbReference type="STRING" id="9031.ENSGALP00000071286"/>
<dbReference type="PaxDb" id="9031-ENSGALP00000024868"/>
<dbReference type="Ensembl" id="ENSGALT00010006403.1">
    <property type="protein sequence ID" value="ENSGALP00010003957.1"/>
    <property type="gene ID" value="ENSGALG00010002760.1"/>
</dbReference>
<dbReference type="GeneID" id="396153"/>
<dbReference type="KEGG" id="gga:396153"/>
<dbReference type="CTD" id="5862"/>
<dbReference type="VEuPathDB" id="HostDB:geneid_396153"/>
<dbReference type="eggNOG" id="KOG0098">
    <property type="taxonomic scope" value="Eukaryota"/>
</dbReference>
<dbReference type="GeneTree" id="ENSGT00940000153886"/>
<dbReference type="HOGENOM" id="CLU_041217_23_1_1"/>
<dbReference type="InParanoid" id="Q90965"/>
<dbReference type="OMA" id="TNATHAC"/>
<dbReference type="OrthoDB" id="9989112at2759"/>
<dbReference type="PhylomeDB" id="Q90965"/>
<dbReference type="Reactome" id="R-GGA-162658">
    <property type="pathway name" value="Golgi Cisternae Pericentriolar Stack Reorganization"/>
</dbReference>
<dbReference type="PRO" id="PR:Q90965"/>
<dbReference type="Proteomes" id="UP000000539">
    <property type="component" value="Chromosome 2"/>
</dbReference>
<dbReference type="Bgee" id="ENSGALG00000015450">
    <property type="expression patterns" value="Expressed in brain and 14 other cell types or tissues"/>
</dbReference>
<dbReference type="GO" id="GO:0001669">
    <property type="term" value="C:acrosomal vesicle"/>
    <property type="evidence" value="ECO:0007669"/>
    <property type="project" value="UniProtKB-SubCell"/>
</dbReference>
<dbReference type="GO" id="GO:0005789">
    <property type="term" value="C:endoplasmic reticulum membrane"/>
    <property type="evidence" value="ECO:0007669"/>
    <property type="project" value="UniProtKB-SubCell"/>
</dbReference>
<dbReference type="GO" id="GO:0033116">
    <property type="term" value="C:endoplasmic reticulum-Golgi intermediate compartment membrane"/>
    <property type="evidence" value="ECO:0007669"/>
    <property type="project" value="UniProtKB-SubCell"/>
</dbReference>
<dbReference type="GO" id="GO:0005794">
    <property type="term" value="C:Golgi apparatus"/>
    <property type="evidence" value="ECO:0000318"/>
    <property type="project" value="GO_Central"/>
</dbReference>
<dbReference type="GO" id="GO:0000139">
    <property type="term" value="C:Golgi membrane"/>
    <property type="evidence" value="ECO:0000318"/>
    <property type="project" value="GO_Central"/>
</dbReference>
<dbReference type="GO" id="GO:0042470">
    <property type="term" value="C:melanosome"/>
    <property type="evidence" value="ECO:0007669"/>
    <property type="project" value="UniProtKB-SubCell"/>
</dbReference>
<dbReference type="GO" id="GO:0003925">
    <property type="term" value="F:G protein activity"/>
    <property type="evidence" value="ECO:0000250"/>
    <property type="project" value="UniProtKB"/>
</dbReference>
<dbReference type="GO" id="GO:0005525">
    <property type="term" value="F:GTP binding"/>
    <property type="evidence" value="ECO:0000318"/>
    <property type="project" value="GO_Central"/>
</dbReference>
<dbReference type="GO" id="GO:0003924">
    <property type="term" value="F:GTPase activity"/>
    <property type="evidence" value="ECO:0000318"/>
    <property type="project" value="GO_Central"/>
</dbReference>
<dbReference type="GO" id="GO:0061909">
    <property type="term" value="P:autophagosome-lysosome fusion"/>
    <property type="evidence" value="ECO:0000250"/>
    <property type="project" value="UniProtKB"/>
</dbReference>
<dbReference type="GO" id="GO:0007030">
    <property type="term" value="P:Golgi organization"/>
    <property type="evidence" value="ECO:0000250"/>
    <property type="project" value="UniProtKB"/>
</dbReference>
<dbReference type="GO" id="GO:0015031">
    <property type="term" value="P:protein transport"/>
    <property type="evidence" value="ECO:0007669"/>
    <property type="project" value="UniProtKB-KW"/>
</dbReference>
<dbReference type="GO" id="GO:0016192">
    <property type="term" value="P:vesicle-mediated transport"/>
    <property type="evidence" value="ECO:0000318"/>
    <property type="project" value="GO_Central"/>
</dbReference>
<dbReference type="CDD" id="cd01866">
    <property type="entry name" value="Rab2"/>
    <property type="match status" value="1"/>
</dbReference>
<dbReference type="FunFam" id="3.40.50.300:FF:000275">
    <property type="entry name" value="Putative ras-related protein Rab-2A"/>
    <property type="match status" value="1"/>
</dbReference>
<dbReference type="Gene3D" id="3.40.50.300">
    <property type="entry name" value="P-loop containing nucleotide triphosphate hydrolases"/>
    <property type="match status" value="1"/>
</dbReference>
<dbReference type="InterPro" id="IPR027417">
    <property type="entry name" value="P-loop_NTPase"/>
</dbReference>
<dbReference type="InterPro" id="IPR050209">
    <property type="entry name" value="Rab_GTPases_membrane_traffic"/>
</dbReference>
<dbReference type="InterPro" id="IPR005225">
    <property type="entry name" value="Small_GTP-bd"/>
</dbReference>
<dbReference type="InterPro" id="IPR001806">
    <property type="entry name" value="Small_GTPase"/>
</dbReference>
<dbReference type="NCBIfam" id="TIGR00231">
    <property type="entry name" value="small_GTP"/>
    <property type="match status" value="1"/>
</dbReference>
<dbReference type="PANTHER" id="PTHR47979">
    <property type="entry name" value="DRAB11-RELATED"/>
    <property type="match status" value="1"/>
</dbReference>
<dbReference type="Pfam" id="PF00071">
    <property type="entry name" value="Ras"/>
    <property type="match status" value="1"/>
</dbReference>
<dbReference type="PRINTS" id="PR00449">
    <property type="entry name" value="RASTRNSFRMNG"/>
</dbReference>
<dbReference type="SMART" id="SM00175">
    <property type="entry name" value="RAB"/>
    <property type="match status" value="1"/>
</dbReference>
<dbReference type="SMART" id="SM00176">
    <property type="entry name" value="RAN"/>
    <property type="match status" value="1"/>
</dbReference>
<dbReference type="SMART" id="SM00173">
    <property type="entry name" value="RAS"/>
    <property type="match status" value="1"/>
</dbReference>
<dbReference type="SMART" id="SM00174">
    <property type="entry name" value="RHO"/>
    <property type="match status" value="1"/>
</dbReference>
<dbReference type="SUPFAM" id="SSF52540">
    <property type="entry name" value="P-loop containing nucleoside triphosphate hydrolases"/>
    <property type="match status" value="1"/>
</dbReference>
<dbReference type="PROSITE" id="PS51419">
    <property type="entry name" value="RAB"/>
    <property type="match status" value="1"/>
</dbReference>
<keyword id="KW-0968">Cytoplasmic vesicle</keyword>
<keyword id="KW-0256">Endoplasmic reticulum</keyword>
<keyword id="KW-0931">ER-Golgi transport</keyword>
<keyword id="KW-0333">Golgi apparatus</keyword>
<keyword id="KW-0342">GTP-binding</keyword>
<keyword id="KW-0378">Hydrolase</keyword>
<keyword id="KW-0449">Lipoprotein</keyword>
<keyword id="KW-0460">Magnesium</keyword>
<keyword id="KW-0472">Membrane</keyword>
<keyword id="KW-0479">Metal-binding</keyword>
<keyword id="KW-0547">Nucleotide-binding</keyword>
<keyword id="KW-0636">Prenylation</keyword>
<keyword id="KW-0653">Protein transport</keyword>
<keyword id="KW-1185">Reference proteome</keyword>
<keyword id="KW-0813">Transport</keyword>
<name>RAB2A_CHICK</name>
<comment type="function">
    <text evidence="3">The small GTPases Rab are key regulators of intracellular membrane trafficking, from the formation of transport vesicles to their fusion with membranes. Rabs cycle between active GTP-bound and inactive GDP-bound states. In their active state, drive transport of vesicular carriers from donor organelles to acceptor organelles to regulate the membrane traffic that maintains organelle identity and morphology. RAB2A regulates autophagy by promoting autophagosome-lysosome fusion via recruitment of the HOPS endosomal tethering complex; this process involves autophagosomal RAB2A and lysosomal RAB39A recruitment of HOPS subcomplexes VPS39-VPS11 and VPS41-VPS16-VPS18-VPS33A, respectively, which assemble into a functional complex to mediate membrane tethering and SNAREs-driven membrane fusion. Required for protein transport from the endoplasmic reticulum to the Golgi complex. Regulates the compacted morphology of the Golgi. Together with RAB2B, redundantly required for efficient autophagic flux.</text>
</comment>
<comment type="catalytic activity">
    <reaction evidence="2">
        <text>GTP + H2O = GDP + phosphate + H(+)</text>
        <dbReference type="Rhea" id="RHEA:19669"/>
        <dbReference type="ChEBI" id="CHEBI:15377"/>
        <dbReference type="ChEBI" id="CHEBI:15378"/>
        <dbReference type="ChEBI" id="CHEBI:37565"/>
        <dbReference type="ChEBI" id="CHEBI:43474"/>
        <dbReference type="ChEBI" id="CHEBI:58189"/>
        <dbReference type="EC" id="3.6.5.2"/>
    </reaction>
    <physiologicalReaction direction="left-to-right" evidence="2">
        <dbReference type="Rhea" id="RHEA:19670"/>
    </physiologicalReaction>
</comment>
<comment type="cofactor">
    <cofactor evidence="3">
        <name>Mg(2+)</name>
        <dbReference type="ChEBI" id="CHEBI:18420"/>
    </cofactor>
</comment>
<comment type="activity regulation">
    <text evidence="5">Regulated by guanine nucleotide exchange factors (GEFs) which promote the exchange of bound GDP for free GTP, GTPase activating proteins (GAPs) which increase the GTP hydrolysis activity, and GDP dissociation inhibitors (GDIs) which inhibit the dissociation of the nucleotide from the GTPase.</text>
</comment>
<comment type="subunit">
    <text evidence="2 3">Interacts with PRKCI. Interacts with TRIP11 (By similarity). Interacts (in GTP-bound form) with GARIN1B (By similarity).</text>
</comment>
<comment type="subcellular location">
    <subcellularLocation>
        <location evidence="3">Endoplasmic reticulum-Golgi intermediate compartment membrane</location>
        <topology evidence="3">Lipid-anchor</topology>
    </subcellularLocation>
    <subcellularLocation>
        <location evidence="3">Melanosome</location>
    </subcellularLocation>
    <subcellularLocation>
        <location evidence="3">Endoplasmic reticulum membrane</location>
        <topology evidence="3">Lipid-anchor</topology>
    </subcellularLocation>
    <subcellularLocation>
        <location evidence="3">Golgi apparatus membrane</location>
        <topology evidence="3">Lipid-anchor</topology>
    </subcellularLocation>
    <subcellularLocation>
        <location evidence="2">Cytoplasmic vesicle</location>
        <location evidence="2">Secretory vesicle</location>
        <location evidence="2">Acrosome</location>
    </subcellularLocation>
    <text evidence="2 3">Localized in the Golgi apparatus in the round spermatids and in the acrosome in the elongating spermatid (By similarity). Identified by mass spectrometry in melanosome fractions from stage I to stage IV (By similarity).</text>
</comment>
<comment type="domain">
    <text evidence="4">Switch I, switch II and the interswitch regions are characteristic of Rab GTPases and mediate the interactions with Rab downstream effectors. The switch regions undergo conformational changes upon nucleotide binding which drives interaction with specific sets of effector proteins, with most effectors only binding to GTP-bound Rab.</text>
</comment>
<comment type="PTM">
    <text evidence="3">Prenylated. Prenylation is required for association with cellular membranes.</text>
</comment>
<comment type="similarity">
    <text evidence="5">Belongs to the small GTPase superfamily. Rab family.</text>
</comment>
<feature type="chain" id="PRO_0000260524" description="Ras-related protein Rab-2A">
    <location>
        <begin position="1"/>
        <end position="212"/>
    </location>
</feature>
<feature type="short sequence motif" description="Switch 1" evidence="4">
    <location>
        <begin position="37"/>
        <end position="42"/>
    </location>
</feature>
<feature type="short sequence motif" description="Switch 2" evidence="4">
    <location>
        <begin position="63"/>
        <end position="72"/>
    </location>
</feature>
<feature type="binding site" evidence="4">
    <location>
        <position position="16"/>
    </location>
    <ligand>
        <name>GTP</name>
        <dbReference type="ChEBI" id="CHEBI:37565"/>
    </ligand>
</feature>
<feature type="binding site" evidence="4">
    <location>
        <position position="17"/>
    </location>
    <ligand>
        <name>GTP</name>
        <dbReference type="ChEBI" id="CHEBI:37565"/>
    </ligand>
</feature>
<feature type="binding site" evidence="4">
    <location>
        <position position="18"/>
    </location>
    <ligand>
        <name>GTP</name>
        <dbReference type="ChEBI" id="CHEBI:37565"/>
    </ligand>
</feature>
<feature type="binding site" evidence="4">
    <location>
        <position position="19"/>
    </location>
    <ligand>
        <name>GTP</name>
        <dbReference type="ChEBI" id="CHEBI:37565"/>
    </ligand>
</feature>
<feature type="binding site" evidence="4">
    <location>
        <position position="20"/>
    </location>
    <ligand>
        <name>GTP</name>
        <dbReference type="ChEBI" id="CHEBI:37565"/>
    </ligand>
</feature>
<feature type="binding site" evidence="3">
    <location>
        <position position="20"/>
    </location>
    <ligand>
        <name>Mg(2+)</name>
        <dbReference type="ChEBI" id="CHEBI:18420"/>
    </ligand>
</feature>
<feature type="binding site" evidence="4">
    <location>
        <position position="21"/>
    </location>
    <ligand>
        <name>GTP</name>
        <dbReference type="ChEBI" id="CHEBI:37565"/>
    </ligand>
</feature>
<feature type="binding site" evidence="4">
    <location>
        <position position="38"/>
    </location>
    <ligand>
        <name>GTP</name>
        <dbReference type="ChEBI" id="CHEBI:37565"/>
    </ligand>
</feature>
<feature type="binding site" evidence="4">
    <location>
        <position position="38"/>
    </location>
    <ligand>
        <name>Mg(2+)</name>
        <dbReference type="ChEBI" id="CHEBI:18420"/>
    </ligand>
</feature>
<feature type="binding site" evidence="3">
    <location>
        <position position="61"/>
    </location>
    <ligand>
        <name>Mg(2+)</name>
        <dbReference type="ChEBI" id="CHEBI:18420"/>
    </ligand>
</feature>
<feature type="binding site" evidence="4">
    <location>
        <position position="64"/>
    </location>
    <ligand>
        <name>GTP</name>
        <dbReference type="ChEBI" id="CHEBI:37565"/>
    </ligand>
</feature>
<feature type="binding site" evidence="4">
    <location>
        <position position="119"/>
    </location>
    <ligand>
        <name>GTP</name>
        <dbReference type="ChEBI" id="CHEBI:37565"/>
    </ligand>
</feature>
<feature type="binding site" evidence="4">
    <location>
        <position position="120"/>
    </location>
    <ligand>
        <name>GTP</name>
        <dbReference type="ChEBI" id="CHEBI:37565"/>
    </ligand>
</feature>
<feature type="binding site" evidence="4">
    <location>
        <position position="122"/>
    </location>
    <ligand>
        <name>GTP</name>
        <dbReference type="ChEBI" id="CHEBI:37565"/>
    </ligand>
</feature>
<feature type="binding site" evidence="4">
    <location>
        <position position="150"/>
    </location>
    <ligand>
        <name>GTP</name>
        <dbReference type="ChEBI" id="CHEBI:37565"/>
    </ligand>
</feature>
<feature type="binding site" evidence="4">
    <location>
        <position position="151"/>
    </location>
    <ligand>
        <name>GTP</name>
        <dbReference type="ChEBI" id="CHEBI:37565"/>
    </ligand>
</feature>
<feature type="lipid moiety-binding region" description="S-geranylgeranyl cysteine" evidence="1">
    <location>
        <position position="211"/>
    </location>
</feature>
<feature type="lipid moiety-binding region" description="S-geranylgeranyl cysteine" evidence="1">
    <location>
        <position position="212"/>
    </location>
</feature>
<evidence type="ECO:0000250" key="1"/>
<evidence type="ECO:0000250" key="2">
    <source>
        <dbReference type="UniProtKB" id="P53994"/>
    </source>
</evidence>
<evidence type="ECO:0000250" key="3">
    <source>
        <dbReference type="UniProtKB" id="P61019"/>
    </source>
</evidence>
<evidence type="ECO:0000250" key="4">
    <source>
        <dbReference type="UniProtKB" id="P61106"/>
    </source>
</evidence>
<evidence type="ECO:0000305" key="5"/>
<reference key="1">
    <citation type="journal article" date="1995" name="DNA Seq.">
        <title>Rab2 nucleotide coding sequence in Gallus gallus and it phylogenetic position.</title>
        <authorList>
            <person name="Montpellier C."/>
            <person name="Kherrouche Z."/>
            <person name="Begue A."/>
            <person name="Stehelin D."/>
            <person name="Coll J."/>
        </authorList>
    </citation>
    <scope>NUCLEOTIDE SEQUENCE [MRNA]</scope>
    <source>
        <tissue>Fibroblast</tissue>
    </source>
</reference>
<gene>
    <name type="primary">RAB2A</name>
    <name type="synonym">RAB2</name>
</gene>
<protein>
    <recommendedName>
        <fullName>Ras-related protein Rab-2A</fullName>
        <ecNumber evidence="2">3.6.5.2</ecNumber>
    </recommendedName>
</protein>
<organism>
    <name type="scientific">Gallus gallus</name>
    <name type="common">Chicken</name>
    <dbReference type="NCBI Taxonomy" id="9031"/>
    <lineage>
        <taxon>Eukaryota</taxon>
        <taxon>Metazoa</taxon>
        <taxon>Chordata</taxon>
        <taxon>Craniata</taxon>
        <taxon>Vertebrata</taxon>
        <taxon>Euteleostomi</taxon>
        <taxon>Archelosauria</taxon>
        <taxon>Archosauria</taxon>
        <taxon>Dinosauria</taxon>
        <taxon>Saurischia</taxon>
        <taxon>Theropoda</taxon>
        <taxon>Coelurosauria</taxon>
        <taxon>Aves</taxon>
        <taxon>Neognathae</taxon>
        <taxon>Galloanserae</taxon>
        <taxon>Galliformes</taxon>
        <taxon>Phasianidae</taxon>
        <taxon>Phasianinae</taxon>
        <taxon>Gallus</taxon>
    </lineage>
</organism>
<proteinExistence type="evidence at transcript level"/>
<sequence length="212" mass="23522">MAYAYLFKYIIIGDTGVGKSCLLLQFTDKRFQPVHDLTIGVEFGARMITIDGKQIKLQIWDTAGQESFRSITRSYYRGAAGALLVYDITRRDTFNHLTTWLEDARQHSNSNMVIMLIGNKSDLESRREVKKEEGEAFAREHGLIFMETSAKTASNVEEAFINTAKEIYEKIQEGVFDINNEANGIKIGPQHAATNATLAGNQGGQQAGGGCC</sequence>
<accession>Q90965</accession>